<gene>
    <name type="primary">KRTAP19-4</name>
    <name type="synonym">KAP19.4</name>
</gene>
<accession>Q3LI73</accession>
<accession>Q17RT4</accession>
<accession>Q17RT6</accession>
<proteinExistence type="evidence at protein level"/>
<keyword id="KW-0416">Keratin</keyword>
<keyword id="KW-1185">Reference proteome</keyword>
<keyword id="KW-0677">Repeat</keyword>
<sequence length="84" mass="9106">MSYYGSYYRGLGYGCGGFGGLGYGYGCGCGSFRRLGYGCGFGGNGYGYCRPSCYGGYGFSILLKSYPEDTISEVIRRSFNLTKY</sequence>
<protein>
    <recommendedName>
        <fullName>Keratin-associated protein 19-4</fullName>
    </recommendedName>
</protein>
<organism>
    <name type="scientific">Homo sapiens</name>
    <name type="common">Human</name>
    <dbReference type="NCBI Taxonomy" id="9606"/>
    <lineage>
        <taxon>Eukaryota</taxon>
        <taxon>Metazoa</taxon>
        <taxon>Chordata</taxon>
        <taxon>Craniata</taxon>
        <taxon>Vertebrata</taxon>
        <taxon>Euteleostomi</taxon>
        <taxon>Mammalia</taxon>
        <taxon>Eutheria</taxon>
        <taxon>Euarchontoglires</taxon>
        <taxon>Primates</taxon>
        <taxon>Haplorrhini</taxon>
        <taxon>Catarrhini</taxon>
        <taxon>Hominidae</taxon>
        <taxon>Homo</taxon>
    </lineage>
</organism>
<comment type="function">
    <text>In the hair cortex, hair keratin intermediate filaments are embedded in an interfilamentous matrix, consisting of hair keratin-associated proteins (KRTAP), which are essential for the formation of a rigid and resistant hair shaft through their extensive disulfide bond cross-linking with abundant cysteine residues of hair keratins. The matrix proteins include the high-sulfur and high-glycine-tyrosine keratins.</text>
</comment>
<comment type="subunit">
    <text evidence="1">Interacts with hair keratins.</text>
</comment>
<comment type="interaction">
    <interactant intactId="EBI-12958461">
        <id>Q3LI73</id>
    </interactant>
    <interactant intactId="EBI-347538">
        <id>Q9Y4H4</id>
        <label>GPSM3</label>
    </interactant>
    <organismsDiffer>false</organismsDiffer>
    <experiments>3</experiments>
</comment>
<comment type="interaction">
    <interactant intactId="EBI-12958461">
        <id>Q3LI73</id>
    </interactant>
    <interactant intactId="EBI-739890">
        <id>Q9P2K6</id>
        <label>KLHL42</label>
    </interactant>
    <organismsDiffer>false</organismsDiffer>
    <experiments>3</experiments>
</comment>
<comment type="interaction">
    <interactant intactId="EBI-12958461">
        <id>Q3LI73</id>
    </interactant>
    <interactant intactId="EBI-9088686">
        <id>Q14847-2</id>
        <label>LASP1</label>
    </interactant>
    <organismsDiffer>false</organismsDiffer>
    <experiments>3</experiments>
</comment>
<comment type="interaction">
    <interactant intactId="EBI-12958461">
        <id>Q3LI73</id>
    </interactant>
    <interactant intactId="EBI-12025760">
        <id>Q86UR1-2</id>
        <label>NOXA1</label>
    </interactant>
    <organismsDiffer>false</organismsDiffer>
    <experiments>3</experiments>
</comment>
<comment type="similarity">
    <text evidence="3">Belongs to the KRTAP type 19 family.</text>
</comment>
<reference key="1">
    <citation type="submission" date="2002-11" db="EMBL/GenBank/DDBJ databases">
        <title>Identification of complete keratin-associated protein (KAP) gene cluster spanning 800 kb region on human chromosome 21q22.11.</title>
        <authorList>
            <person name="Obayashi I."/>
            <person name="Shibuya K."/>
            <person name="Minoshima S."/>
            <person name="Kudoh J."/>
            <person name="Shimizu N."/>
        </authorList>
    </citation>
    <scope>NUCLEOTIDE SEQUENCE [MRNA]</scope>
    <source>
        <tissue>Hair root</tissue>
    </source>
</reference>
<reference key="2">
    <citation type="journal article" date="2004" name="Genome Res.">
        <title>The status, quality, and expansion of the NIH full-length cDNA project: the Mammalian Gene Collection (MGC).</title>
        <authorList>
            <consortium name="The MGC Project Team"/>
        </authorList>
    </citation>
    <scope>NUCLEOTIDE SEQUENCE [LARGE SCALE MRNA]</scope>
    <scope>VARIANT CYS-48</scope>
</reference>
<name>KR194_HUMAN</name>
<evidence type="ECO:0000250" key="1"/>
<evidence type="ECO:0000269" key="2">
    <source>
    </source>
</evidence>
<evidence type="ECO:0000305" key="3"/>
<dbReference type="EMBL" id="AB096945">
    <property type="protein sequence ID" value="BAE46360.1"/>
    <property type="molecule type" value="mRNA"/>
</dbReference>
<dbReference type="EMBL" id="BC117197">
    <property type="protein sequence ID" value="AAI17198.1"/>
    <property type="molecule type" value="mRNA"/>
</dbReference>
<dbReference type="EMBL" id="BC117199">
    <property type="protein sequence ID" value="AAI17200.1"/>
    <property type="molecule type" value="mRNA"/>
</dbReference>
<dbReference type="CCDS" id="CCDS33534.1"/>
<dbReference type="RefSeq" id="NP_853641.1">
    <property type="nucleotide sequence ID" value="NM_181610.3"/>
</dbReference>
<dbReference type="BioGRID" id="130654">
    <property type="interactions" value="12"/>
</dbReference>
<dbReference type="FunCoup" id="Q3LI73">
    <property type="interactions" value="12"/>
</dbReference>
<dbReference type="IntAct" id="Q3LI73">
    <property type="interactions" value="10"/>
</dbReference>
<dbReference type="STRING" id="9606.ENSP00000335567"/>
<dbReference type="iPTMnet" id="Q3LI73"/>
<dbReference type="PhosphoSitePlus" id="Q3LI73"/>
<dbReference type="BioMuta" id="KRTAP19-4"/>
<dbReference type="DMDM" id="88909170"/>
<dbReference type="MassIVE" id="Q3LI73"/>
<dbReference type="PaxDb" id="9606-ENSP00000335567"/>
<dbReference type="PeptideAtlas" id="Q3LI73"/>
<dbReference type="Antibodypedia" id="34974">
    <property type="antibodies" value="2 antibodies from 2 providers"/>
</dbReference>
<dbReference type="DNASU" id="337971"/>
<dbReference type="Ensembl" id="ENST00000334058.3">
    <property type="protein sequence ID" value="ENSP00000335567.2"/>
    <property type="gene ID" value="ENSG00000186967.7"/>
</dbReference>
<dbReference type="GeneID" id="337971"/>
<dbReference type="KEGG" id="hsa:337971"/>
<dbReference type="MANE-Select" id="ENST00000334058.3">
    <property type="protein sequence ID" value="ENSP00000335567.2"/>
    <property type="RefSeq nucleotide sequence ID" value="NM_181610.3"/>
    <property type="RefSeq protein sequence ID" value="NP_853641.1"/>
</dbReference>
<dbReference type="UCSC" id="uc011acz.3">
    <property type="organism name" value="human"/>
</dbReference>
<dbReference type="AGR" id="HGNC:18939"/>
<dbReference type="CTD" id="337971"/>
<dbReference type="GeneCards" id="KRTAP19-4"/>
<dbReference type="HGNC" id="HGNC:18939">
    <property type="gene designation" value="KRTAP19-4"/>
</dbReference>
<dbReference type="HPA" id="ENSG00000186967">
    <property type="expression patterns" value="Not detected"/>
</dbReference>
<dbReference type="neXtProt" id="NX_Q3LI73"/>
<dbReference type="PharmGKB" id="PA134984740"/>
<dbReference type="VEuPathDB" id="HostDB:ENSG00000186967"/>
<dbReference type="eggNOG" id="ENOG502TDP7">
    <property type="taxonomic scope" value="Eukaryota"/>
</dbReference>
<dbReference type="GeneTree" id="ENSGT01030000235953"/>
<dbReference type="HOGENOM" id="CLU_184630_1_0_1"/>
<dbReference type="InParanoid" id="Q3LI73"/>
<dbReference type="OMA" id="MSHYSNH"/>
<dbReference type="OrthoDB" id="9540074at2759"/>
<dbReference type="PAN-GO" id="Q3LI73">
    <property type="GO annotations" value="0 GO annotations based on evolutionary models"/>
</dbReference>
<dbReference type="PathwayCommons" id="Q3LI73"/>
<dbReference type="Reactome" id="R-HSA-6805567">
    <property type="pathway name" value="Keratinization"/>
</dbReference>
<dbReference type="SignaLink" id="Q3LI73"/>
<dbReference type="BioGRID-ORCS" id="337971">
    <property type="hits" value="10 hits in 1065 CRISPR screens"/>
</dbReference>
<dbReference type="GenomeRNAi" id="337971"/>
<dbReference type="Pharos" id="Q3LI73">
    <property type="development level" value="Tdark"/>
</dbReference>
<dbReference type="PRO" id="PR:Q3LI73"/>
<dbReference type="Proteomes" id="UP000005640">
    <property type="component" value="Chromosome 21"/>
</dbReference>
<dbReference type="RNAct" id="Q3LI73">
    <property type="molecule type" value="protein"/>
</dbReference>
<dbReference type="Bgee" id="ENSG00000186967">
    <property type="expression patterns" value="Expressed in cell and 16 other cell types or tissues"/>
</dbReference>
<dbReference type="GO" id="GO:0005829">
    <property type="term" value="C:cytosol"/>
    <property type="evidence" value="ECO:0000304"/>
    <property type="project" value="Reactome"/>
</dbReference>
<dbReference type="GO" id="GO:0005882">
    <property type="term" value="C:intermediate filament"/>
    <property type="evidence" value="ECO:0007669"/>
    <property type="project" value="UniProtKB-KW"/>
</dbReference>
<dbReference type="InterPro" id="IPR021743">
    <property type="entry name" value="KRTAP_type8/19/20/21/22"/>
</dbReference>
<dbReference type="InterPro" id="IPR051528">
    <property type="entry name" value="KRTAP_type_19"/>
</dbReference>
<dbReference type="PANTHER" id="PTHR38140">
    <property type="entry name" value="KERATIN-ASSOCIATED PROTEIN 19-3-RELATED"/>
    <property type="match status" value="1"/>
</dbReference>
<dbReference type="PANTHER" id="PTHR38140:SF5">
    <property type="entry name" value="KERATIN-ASSOCIATED PROTEIN 19-4-RELATED"/>
    <property type="match status" value="1"/>
</dbReference>
<dbReference type="Pfam" id="PF11759">
    <property type="entry name" value="KRTAP"/>
    <property type="match status" value="1"/>
</dbReference>
<feature type="chain" id="PRO_0000223906" description="Keratin-associated protein 19-4">
    <location>
        <begin position="1"/>
        <end position="84"/>
    </location>
</feature>
<feature type="sequence variant" id="VAR_053475" description="In dbSNP:rs2298437." evidence="2">
    <original>Y</original>
    <variation>C</variation>
    <location>
        <position position="48"/>
    </location>
</feature>